<protein>
    <recommendedName>
        <fullName>Phosphatidylcholine-sterol acyltransferase</fullName>
        <ecNumber evidence="3">2.3.1.43</ecNumber>
    </recommendedName>
    <alternativeName>
        <fullName>1-alkyl-2-acetylglycerophosphocholine esterase</fullName>
        <ecNumber evidence="1">3.1.1.47</ecNumber>
    </alternativeName>
    <alternativeName>
        <fullName>Lecithin-cholesterol acyltransferase</fullName>
    </alternativeName>
    <alternativeName>
        <fullName>Phospholipid-cholesterol acyltransferase</fullName>
    </alternativeName>
    <alternativeName>
        <fullName evidence="1">Platelet-activating factor acetylhydrolase</fullName>
        <shortName>PAF acetylhydrolase</shortName>
    </alternativeName>
</protein>
<comment type="function">
    <text evidence="1 3">Central enzyme in the extracellular metabolism of plasma lipoproteins. Synthesized mainly in the liver and secreted into plasma where it converts cholesterol and phosphatidylcholines (lecithins) to cholesteryl esters and lysophosphatidylcholines on the surface of high and low density lipoproteins (HDLs and LDLs). The cholesterol ester is then transported back to the liver. Also produced in the brain by primary astrocytes, and esterifies free cholesterol on nascent APOE-containing lipoproteins secreted from glia and influences cerebral spinal fluid (CSF) APOE- and APOA1 levels. Together with APOE and the cholesterol transporter ABCA1, plays a key role in the maturation of glial-derived, nascent lipoproteins. Required for remodeling high-density lipoprotein particles into their spherical forms (By similarity). Has a preference for plasma 16:0-18:2 or 18:O-18:2 phosphatidylcholines (PubMed:8820107). Catalyzes the hydrolysis of 1-O-alkyl-2-acetyl-sn-glycero-3-phosphocholine (platelet-activating factor or PAF) to 1-O-alkyl-sn-glycero-3-phosphocholine (lyso-PAF) (By similarity). Also catalyzes the transfer of the acetate group from PAF to 1-hexadecanoyl-sn-glycero-3-phosphocholine forming lyso-PAF (By similarity). Catalyzes the esterification of (24S)-hydroxycholesterol (24(S)OH-C), also known as cerebrosterol to produce 24(S)OH-C monoesters (By similarity).</text>
</comment>
<comment type="catalytic activity">
    <reaction evidence="2 3">
        <text>a sterol + a 1,2-diacyl-sn-glycero-3-phosphocholine = a sterol ester + a 1-acyl-sn-glycero-3-phosphocholine</text>
        <dbReference type="Rhea" id="RHEA:21204"/>
        <dbReference type="ChEBI" id="CHEBI:15889"/>
        <dbReference type="ChEBI" id="CHEBI:35915"/>
        <dbReference type="ChEBI" id="CHEBI:57643"/>
        <dbReference type="ChEBI" id="CHEBI:58168"/>
        <dbReference type="EC" id="2.3.1.43"/>
    </reaction>
</comment>
<comment type="catalytic activity">
    <reaction evidence="1">
        <text>a 1-O-alkyl-2-acetyl-sn-glycero-3-phosphocholine + H2O = a 1-O-alkyl-sn-glycero-3-phosphocholine + acetate + H(+)</text>
        <dbReference type="Rhea" id="RHEA:17777"/>
        <dbReference type="ChEBI" id="CHEBI:15377"/>
        <dbReference type="ChEBI" id="CHEBI:15378"/>
        <dbReference type="ChEBI" id="CHEBI:30089"/>
        <dbReference type="ChEBI" id="CHEBI:30909"/>
        <dbReference type="ChEBI" id="CHEBI:36707"/>
        <dbReference type="EC" id="3.1.1.47"/>
    </reaction>
    <physiologicalReaction direction="left-to-right" evidence="1">
        <dbReference type="Rhea" id="RHEA:17778"/>
    </physiologicalReaction>
</comment>
<comment type="catalytic activity">
    <reaction evidence="1">
        <text>a 1-hexadecanoyl-2-acyl-sn-glycero-3-phosphocholine + (24S)-hydroxycholesterol = (24S)-24-hydroxycholesterol ester + 1-hexadecanoyl-sn-glycero-3-phosphocholine</text>
        <dbReference type="Rhea" id="RHEA:43216"/>
        <dbReference type="ChEBI" id="CHEBI:34310"/>
        <dbReference type="ChEBI" id="CHEBI:72998"/>
        <dbReference type="ChEBI" id="CHEBI:77369"/>
        <dbReference type="ChEBI" id="CHEBI:82869"/>
    </reaction>
    <physiologicalReaction direction="left-to-right" evidence="1">
        <dbReference type="Rhea" id="RHEA:43217"/>
    </physiologicalReaction>
</comment>
<comment type="catalytic activity">
    <reaction evidence="1">
        <text>(24S)-hydroxycholesterol + 1-hexadecanoyl-2-(9Z,12Z-octadecadienoyl)-sn-glycero-3-phosphocholine = (24S)-hydroxycholesterol 3-linoleoate + 1-hexadecanoyl-sn-glycero-3-phosphocholine</text>
        <dbReference type="Rhea" id="RHEA:43224"/>
        <dbReference type="ChEBI" id="CHEBI:34310"/>
        <dbReference type="ChEBI" id="CHEBI:72998"/>
        <dbReference type="ChEBI" id="CHEBI:73002"/>
        <dbReference type="ChEBI" id="CHEBI:82875"/>
    </reaction>
    <physiologicalReaction direction="left-to-right" evidence="1">
        <dbReference type="Rhea" id="RHEA:43225"/>
    </physiologicalReaction>
</comment>
<comment type="catalytic activity">
    <reaction evidence="1">
        <text>1-hexadecanoyl-2-(5Z,8Z,11Z,14Z-eicosatetraenoyl)-sn-glycero-3-phosphocholine + cholesterol = cholesteryl (5Z,8Z,11Z,14Z)-eicosatetraenoate + 1-hexadecanoyl-sn-glycero-3-phosphocholine</text>
        <dbReference type="Rhea" id="RHEA:53448"/>
        <dbReference type="ChEBI" id="CHEBI:16113"/>
        <dbReference type="ChEBI" id="CHEBI:72998"/>
        <dbReference type="ChEBI" id="CHEBI:73003"/>
        <dbReference type="ChEBI" id="CHEBI:82751"/>
    </reaction>
    <physiologicalReaction direction="left-to-right" evidence="1">
        <dbReference type="Rhea" id="RHEA:53449"/>
    </physiologicalReaction>
</comment>
<comment type="catalytic activity">
    <reaction evidence="1">
        <text>1-hexadecanoyl-2-(9Z-octadecenoyl)-sn-glycero-3-phosphocholine + cholesterol = cholesteryl (9Z-octadecenoate) + 1-hexadecanoyl-sn-glycero-3-phosphocholine</text>
        <dbReference type="Rhea" id="RHEA:53456"/>
        <dbReference type="ChEBI" id="CHEBI:16113"/>
        <dbReference type="ChEBI" id="CHEBI:46898"/>
        <dbReference type="ChEBI" id="CHEBI:72998"/>
        <dbReference type="ChEBI" id="CHEBI:73001"/>
    </reaction>
    <physiologicalReaction direction="left-to-right" evidence="1">
        <dbReference type="Rhea" id="RHEA:53457"/>
    </physiologicalReaction>
</comment>
<comment type="catalytic activity">
    <reaction evidence="1">
        <text>1-hexadecanoyl-2-(8Z,11Z,14Z-eicosatrienoyl)-sn-glycero-3-phosphocholine + cholesterol = cholesteryl (8Z,11Z,14Z)-eicosatrienoate + 1-hexadecanoyl-sn-glycero-3-phosphocholine</text>
        <dbReference type="Rhea" id="RHEA:53464"/>
        <dbReference type="ChEBI" id="CHEBI:16113"/>
        <dbReference type="ChEBI" id="CHEBI:72998"/>
        <dbReference type="ChEBI" id="CHEBI:84346"/>
        <dbReference type="ChEBI" id="CHEBI:86121"/>
    </reaction>
    <physiologicalReaction direction="left-to-right" evidence="1">
        <dbReference type="Rhea" id="RHEA:53465"/>
    </physiologicalReaction>
</comment>
<comment type="catalytic activity">
    <reaction evidence="1">
        <text>1-hexadecanoyl-2-(5Z,8Z,11Z-eicosatrienoyl)-sn-glycero-3-phosphocholine + cholesterol = cholesteryl (5Z,8Z,11Z)-eicosatrienoate + 1-hexadecanoyl-sn-glycero-3-phosphocholine</text>
        <dbReference type="Rhea" id="RHEA:53460"/>
        <dbReference type="ChEBI" id="CHEBI:16113"/>
        <dbReference type="ChEBI" id="CHEBI:72998"/>
        <dbReference type="ChEBI" id="CHEBI:86119"/>
        <dbReference type="ChEBI" id="CHEBI:88752"/>
    </reaction>
    <physiologicalReaction direction="left-to-right" evidence="1">
        <dbReference type="Rhea" id="RHEA:53461"/>
    </physiologicalReaction>
</comment>
<comment type="catalytic activity">
    <reaction evidence="1">
        <text>1-hexadecanoyl-2-(5Z,8Z,11Z,14Z,17Z-eicosapentaenoyl)-sn-glycero-3-phosphocholine + cholesterol = (5Z,8Z,11Z,14Z,17Z-eicosapentaenoyl)-cholesterol + 1-hexadecanoyl-sn-glycero-3-phosphocholine</text>
        <dbReference type="Rhea" id="RHEA:53468"/>
        <dbReference type="ChEBI" id="CHEBI:16113"/>
        <dbReference type="ChEBI" id="CHEBI:72998"/>
        <dbReference type="ChEBI" id="CHEBI:84969"/>
        <dbReference type="ChEBI" id="CHEBI:86137"/>
    </reaction>
    <physiologicalReaction direction="left-to-right" evidence="1">
        <dbReference type="Rhea" id="RHEA:53469"/>
    </physiologicalReaction>
</comment>
<comment type="catalytic activity">
    <reaction evidence="1">
        <text>1-hexadecanoyl-2-(9Z,12Z-octadecadienoyl)-sn-glycero-3-phosphocholine + cholesterol = cholesteryl (9Z,12Z)-octadecadienoate + 1-hexadecanoyl-sn-glycero-3-phosphocholine</text>
        <dbReference type="Rhea" id="RHEA:53472"/>
        <dbReference type="ChEBI" id="CHEBI:16113"/>
        <dbReference type="ChEBI" id="CHEBI:41509"/>
        <dbReference type="ChEBI" id="CHEBI:72998"/>
        <dbReference type="ChEBI" id="CHEBI:73002"/>
    </reaction>
    <physiologicalReaction direction="left-to-right" evidence="1">
        <dbReference type="Rhea" id="RHEA:53473"/>
    </physiologicalReaction>
</comment>
<comment type="catalytic activity">
    <reaction evidence="1">
        <text>1-hexadecanoyl-2-(6Z,9Z,12Z-octadecatrienoyl)-sn-glycero-3-phosphocholine + cholesterol = (6Z,9Z,12Z-octadecatrienoyl)-cholesterol + 1-hexadecanoyl-sn-glycero-3-phosphocholine</text>
        <dbReference type="Rhea" id="RHEA:53476"/>
        <dbReference type="ChEBI" id="CHEBI:16113"/>
        <dbReference type="ChEBI" id="CHEBI:72998"/>
        <dbReference type="ChEBI" id="CHEBI:84786"/>
        <dbReference type="ChEBI" id="CHEBI:88756"/>
    </reaction>
    <physiologicalReaction direction="left-to-right" evidence="1">
        <dbReference type="Rhea" id="RHEA:53477"/>
    </physiologicalReaction>
</comment>
<comment type="catalytic activity">
    <reaction evidence="1">
        <text>1-hexadecanoyl-2-(11Z,14Z,17Z-eicosatrienoyl)-sn-glycero-3-phosphocholine + cholesterol = (11Z,14Z,17Z-eicosatrienoyl)-cholesterol + 1-hexadecanoyl-sn-glycero-3-phosphocholine</text>
        <dbReference type="Rhea" id="RHEA:53516"/>
        <dbReference type="ChEBI" id="CHEBI:16113"/>
        <dbReference type="ChEBI" id="CHEBI:72998"/>
        <dbReference type="ChEBI" id="CHEBI:137411"/>
        <dbReference type="ChEBI" id="CHEBI:137412"/>
    </reaction>
    <physiologicalReaction direction="left-to-right" evidence="1">
        <dbReference type="Rhea" id="RHEA:53517"/>
    </physiologicalReaction>
</comment>
<comment type="catalytic activity">
    <reaction evidence="1">
        <text>1-hexadecanoyl-2-(9Z,12Z,15Z-octadecatrienoyl)-sn-glycero-3-phosphocholine + cholesterol = (9Z,12Z,15Z-octadecatrienoyl)-cholesterol + 1-hexadecanoyl-sn-glycero-3-phosphocholine</text>
        <dbReference type="Rhea" id="RHEA:53520"/>
        <dbReference type="ChEBI" id="CHEBI:16113"/>
        <dbReference type="ChEBI" id="CHEBI:72998"/>
        <dbReference type="ChEBI" id="CHEBI:84341"/>
        <dbReference type="ChEBI" id="CHEBI:84789"/>
    </reaction>
    <physiologicalReaction direction="left-to-right" evidence="1">
        <dbReference type="Rhea" id="RHEA:53521"/>
    </physiologicalReaction>
</comment>
<comment type="catalytic activity">
    <reaction evidence="1">
        <text>1-hexadecanoyl-2-(9Z,12Z-octadecadienoyl)-sn-glycero-3-phosphocholine + H2O = (9Z,12Z)-octadecadienoate + 1-hexadecanoyl-sn-glycero-3-phosphocholine + H(+)</text>
        <dbReference type="Rhea" id="RHEA:40811"/>
        <dbReference type="ChEBI" id="CHEBI:15377"/>
        <dbReference type="ChEBI" id="CHEBI:15378"/>
        <dbReference type="ChEBI" id="CHEBI:30245"/>
        <dbReference type="ChEBI" id="CHEBI:72998"/>
        <dbReference type="ChEBI" id="CHEBI:73002"/>
    </reaction>
    <physiologicalReaction direction="left-to-right" evidence="1">
        <dbReference type="Rhea" id="RHEA:40812"/>
    </physiologicalReaction>
</comment>
<comment type="catalytic activity">
    <reaction evidence="1">
        <text>1-hexadecanoyl-2-(5Z,8Z,11Z,14Z-eicosatetraenoyl)-sn-glycero-3-phosphocholine + H2O = 1-hexadecanoyl-sn-glycero-3-phosphocholine + (5Z,8Z,11Z,14Z)-eicosatetraenoate + H(+)</text>
        <dbReference type="Rhea" id="RHEA:40427"/>
        <dbReference type="ChEBI" id="CHEBI:15377"/>
        <dbReference type="ChEBI" id="CHEBI:15378"/>
        <dbReference type="ChEBI" id="CHEBI:32395"/>
        <dbReference type="ChEBI" id="CHEBI:72998"/>
        <dbReference type="ChEBI" id="CHEBI:73003"/>
    </reaction>
    <physiologicalReaction direction="left-to-right" evidence="1">
        <dbReference type="Rhea" id="RHEA:40428"/>
    </physiologicalReaction>
</comment>
<comment type="catalytic activity">
    <reaction evidence="1">
        <text>a 1-O-alkyl-2-acetyl-sn-glycero-3-phosphocholine + 1-hexadecanoyl-sn-glycero-3-phosphocholine = 1-hexadecanoyl-2-acetyl-sn-glycero-3-phosphocholine + a 1-O-alkyl-sn-glycero-3-phosphocholine</text>
        <dbReference type="Rhea" id="RHEA:53636"/>
        <dbReference type="ChEBI" id="CHEBI:30909"/>
        <dbReference type="ChEBI" id="CHEBI:36707"/>
        <dbReference type="ChEBI" id="CHEBI:72998"/>
        <dbReference type="ChEBI" id="CHEBI:75219"/>
    </reaction>
    <physiologicalReaction direction="left-to-right" evidence="1">
        <dbReference type="Rhea" id="RHEA:53637"/>
    </physiologicalReaction>
</comment>
<comment type="subcellular location">
    <subcellularLocation>
        <location evidence="3">Secreted</location>
    </subcellularLocation>
    <text evidence="1 3">Secreted into blood plasma (PubMed:8820107). Produced in astrocytes and secreted into cerebral spinal fluid (CSF) (By similarity).</text>
</comment>
<comment type="tissue specificity">
    <text evidence="3">Detected in blood plasma (at protein level) (PubMed:8820107).</text>
</comment>
<comment type="similarity">
    <text evidence="4">Belongs to the AB hydrolase superfamily. Lipase family.</text>
</comment>
<dbReference type="EC" id="2.3.1.43" evidence="3"/>
<dbReference type="EC" id="3.1.1.47" evidence="1"/>
<dbReference type="PIR" id="PL0153">
    <property type="entry name" value="PL0153"/>
</dbReference>
<dbReference type="GlyCosmos" id="P30930">
    <property type="glycosylation" value="1 site, No reported glycans"/>
</dbReference>
<dbReference type="GlyGen" id="P30930">
    <property type="glycosylation" value="1 site"/>
</dbReference>
<dbReference type="PeptideAtlas" id="P30930"/>
<dbReference type="InParanoid" id="P30930"/>
<dbReference type="Proteomes" id="UP000008227">
    <property type="component" value="Unplaced"/>
</dbReference>
<dbReference type="Proteomes" id="UP000314985">
    <property type="component" value="Unplaced"/>
</dbReference>
<dbReference type="Proteomes" id="UP000694570">
    <property type="component" value="Unplaced"/>
</dbReference>
<dbReference type="Proteomes" id="UP000694571">
    <property type="component" value="Unplaced"/>
</dbReference>
<dbReference type="Proteomes" id="UP000694720">
    <property type="component" value="Unplaced"/>
</dbReference>
<dbReference type="Proteomes" id="UP000694722">
    <property type="component" value="Unplaced"/>
</dbReference>
<dbReference type="Proteomes" id="UP000694723">
    <property type="component" value="Unplaced"/>
</dbReference>
<dbReference type="Proteomes" id="UP000694724">
    <property type="component" value="Unplaced"/>
</dbReference>
<dbReference type="Proteomes" id="UP000694725">
    <property type="component" value="Unplaced"/>
</dbReference>
<dbReference type="Proteomes" id="UP000694726">
    <property type="component" value="Unplaced"/>
</dbReference>
<dbReference type="Proteomes" id="UP000694727">
    <property type="component" value="Unplaced"/>
</dbReference>
<dbReference type="Proteomes" id="UP000694728">
    <property type="component" value="Unplaced"/>
</dbReference>
<dbReference type="GO" id="GO:0005615">
    <property type="term" value="C:extracellular space"/>
    <property type="evidence" value="ECO:0000250"/>
    <property type="project" value="UniProtKB"/>
</dbReference>
<dbReference type="GO" id="GO:0003847">
    <property type="term" value="F:1-alkyl-2-acetylglycerophosphocholine esterase activity"/>
    <property type="evidence" value="ECO:0000250"/>
    <property type="project" value="UniProtKB"/>
</dbReference>
<dbReference type="GO" id="GO:0004607">
    <property type="term" value="F:phosphatidylcholine-sterol O-acyltransferase activity"/>
    <property type="evidence" value="ECO:0000250"/>
    <property type="project" value="UniProtKB"/>
</dbReference>
<dbReference type="GO" id="GO:0047179">
    <property type="term" value="F:platelet-activating factor acetyltransferase activity"/>
    <property type="evidence" value="ECO:0000250"/>
    <property type="project" value="UniProtKB"/>
</dbReference>
<dbReference type="GO" id="GO:0008203">
    <property type="term" value="P:cholesterol metabolic process"/>
    <property type="evidence" value="ECO:0000250"/>
    <property type="project" value="UniProtKB"/>
</dbReference>
<dbReference type="GO" id="GO:0006629">
    <property type="term" value="P:lipid metabolic process"/>
    <property type="evidence" value="ECO:0000318"/>
    <property type="project" value="GO_Central"/>
</dbReference>
<dbReference type="GO" id="GO:0046470">
    <property type="term" value="P:phosphatidylcholine metabolic process"/>
    <property type="evidence" value="ECO:0000250"/>
    <property type="project" value="UniProtKB"/>
</dbReference>
<dbReference type="FunFam" id="3.40.50.1820:FF:000090">
    <property type="entry name" value="Phosphatidylcholine-sterol acyltransferase"/>
    <property type="match status" value="1"/>
</dbReference>
<dbReference type="Gene3D" id="3.40.50.1820">
    <property type="entry name" value="alpha/beta hydrolase"/>
    <property type="match status" value="3"/>
</dbReference>
<dbReference type="InterPro" id="IPR029058">
    <property type="entry name" value="AB_hydrolase_fold"/>
</dbReference>
<dbReference type="InterPro" id="IPR003386">
    <property type="entry name" value="LACT/PDAT_acylTrfase"/>
</dbReference>
<dbReference type="Pfam" id="PF02450">
    <property type="entry name" value="LCAT"/>
    <property type="match status" value="1"/>
</dbReference>
<evidence type="ECO:0000250" key="1">
    <source>
        <dbReference type="UniProtKB" id="P04180"/>
    </source>
</evidence>
<evidence type="ECO:0000255" key="2">
    <source>
        <dbReference type="PROSITE-ProRule" id="PRU10037"/>
    </source>
</evidence>
<evidence type="ECO:0000269" key="3">
    <source>
    </source>
</evidence>
<evidence type="ECO:0000305" key="4"/>
<sequence length="188" mass="21238">FWLLNVLFPPHTTPKAELSNHTRPVILVPGCLGNPDVVNWMCYRFTIWLDLNMFLPLGVDVPGFGKTYSVEYLDNSKAAPYDWRLEPSQQEEYYLKISLGAPWGGSDLHFEEGWYDLLAGLPAPGVEVYCLYGVGLPTPRXYIFDXGFPYXDPVQQQPVHLLPLPGTQHLNMVFSXQTLEXINAILLG</sequence>
<name>LCAT_PIG</name>
<reference key="1">
    <citation type="journal article" date="1989" name="Comp. Biochem. Physiol.">
        <title>Studies on the structure of lecithin:cholesterol acyltransferase (LCAT) -- comparisons of the active site region and secondary structure of the human and the porcine enzymes.</title>
        <authorList>
            <person name="Yueksel K.U."/>
            <person name="Park Y.B."/>
            <person name="Jung J."/>
            <person name="Gracy R.W."/>
            <person name="Lacko A.G."/>
        </authorList>
    </citation>
    <scope>PROTEIN SEQUENCE</scope>
    <source>
        <tissue>Plasma</tissue>
    </source>
</reference>
<reference key="2">
    <citation type="journal article" date="1987" name="Biochem. Biophys. Res. Commun.">
        <title>The catalytic center of lecithin:cholesterol acyltransferase: isolation and sequence of diisopropyl fluorophosphate-labeled peptides.</title>
        <authorList>
            <person name="Park Y.B."/>
            <person name="Yuksel K.U."/>
            <person name="Gracy R.W."/>
            <person name="Lacko A.G."/>
        </authorList>
    </citation>
    <scope>PROTEIN SEQUENCE OF 97-106 AND 142-154</scope>
    <source>
        <tissue>Plasma</tissue>
    </source>
</reference>
<reference key="3">
    <citation type="journal article" date="1996" name="J. Lipid Res.">
        <title>Comparative studies on the substrate specificity of lecithin:cholesterol acyltransferase towards the molecular species of phosphatidylcholine in the plasma of 14 vertebrates.</title>
        <authorList>
            <person name="Subbaiah P.V."/>
            <person name="Liu M."/>
        </authorList>
    </citation>
    <scope>CATALYTIC ACTIVITY</scope>
    <scope>FUNCTION</scope>
    <scope>SUBSTRATE SPECIFICITY</scope>
    <scope>SUBCELLULAR LOCATION</scope>
    <scope>TISSUE SPECIFICITY</scope>
</reference>
<keyword id="KW-0012">Acyltransferase</keyword>
<keyword id="KW-0153">Cholesterol metabolism</keyword>
<keyword id="KW-0903">Direct protein sequencing</keyword>
<keyword id="KW-0325">Glycoprotein</keyword>
<keyword id="KW-0378">Hydrolase</keyword>
<keyword id="KW-0443">Lipid metabolism</keyword>
<keyword id="KW-1185">Reference proteome</keyword>
<keyword id="KW-0964">Secreted</keyword>
<keyword id="KW-0753">Steroid metabolism</keyword>
<keyword id="KW-1207">Sterol metabolism</keyword>
<keyword id="KW-0808">Transferase</keyword>
<organism>
    <name type="scientific">Sus scrofa</name>
    <name type="common">Pig</name>
    <dbReference type="NCBI Taxonomy" id="9823"/>
    <lineage>
        <taxon>Eukaryota</taxon>
        <taxon>Metazoa</taxon>
        <taxon>Chordata</taxon>
        <taxon>Craniata</taxon>
        <taxon>Vertebrata</taxon>
        <taxon>Euteleostomi</taxon>
        <taxon>Mammalia</taxon>
        <taxon>Eutheria</taxon>
        <taxon>Laurasiatheria</taxon>
        <taxon>Artiodactyla</taxon>
        <taxon>Suina</taxon>
        <taxon>Suidae</taxon>
        <taxon>Sus</taxon>
    </lineage>
</organism>
<feature type="chain" id="PRO_0000090361" description="Phosphatidylcholine-sterol acyltransferase">
    <location>
        <begin position="1"/>
        <end position="188" status="greater than"/>
    </location>
</feature>
<feature type="active site" description="Charge relay system" evidence="1">
    <location>
        <position position="169"/>
    </location>
</feature>
<feature type="glycosylation site" description="N-linked (GlcNAc...) asparagine">
    <location>
        <position position="20"/>
    </location>
</feature>
<feature type="non-consecutive residues" evidence="4">
    <location>
        <begin position="34"/>
        <end position="35"/>
    </location>
</feature>
<feature type="non-consecutive residues" evidence="4">
    <location>
        <begin position="44"/>
        <end position="45"/>
    </location>
</feature>
<feature type="non-consecutive residues" evidence="4">
    <location>
        <begin position="60"/>
        <end position="61"/>
    </location>
</feature>
<feature type="non-consecutive residues" evidence="4">
    <location>
        <begin position="66"/>
        <end position="67"/>
    </location>
</feature>
<feature type="non-consecutive residues" evidence="4">
    <location>
        <begin position="77"/>
        <end position="78"/>
    </location>
</feature>
<feature type="non-consecutive residues" evidence="4">
    <location>
        <begin position="84"/>
        <end position="85"/>
    </location>
</feature>
<feature type="non-consecutive residues" evidence="4">
    <location>
        <begin position="96"/>
        <end position="97"/>
    </location>
</feature>
<feature type="non-consecutive residues" evidence="4">
    <location>
        <begin position="106"/>
        <end position="107"/>
    </location>
</feature>
<feature type="non-consecutive residues" evidence="4">
    <location>
        <begin position="115"/>
        <end position="116"/>
    </location>
</feature>
<feature type="non-consecutive residues" evidence="4">
    <location>
        <begin position="154"/>
        <end position="155"/>
    </location>
</feature>
<feature type="non-terminal residue">
    <location>
        <position position="188"/>
    </location>
</feature>
<accession>P30930</accession>
<gene>
    <name type="primary">LCAT</name>
</gene>
<proteinExistence type="evidence at protein level"/>